<dbReference type="EMBL" id="AE017340">
    <property type="protein sequence ID" value="AAV82973.1"/>
    <property type="molecule type" value="Genomic_DNA"/>
</dbReference>
<dbReference type="RefSeq" id="WP_011235369.1">
    <property type="nucleotide sequence ID" value="NC_006512.1"/>
</dbReference>
<dbReference type="SMR" id="Q5QVE5"/>
<dbReference type="STRING" id="283942.IL2141"/>
<dbReference type="GeneID" id="41337330"/>
<dbReference type="KEGG" id="ilo:IL2141"/>
<dbReference type="eggNOG" id="COG0781">
    <property type="taxonomic scope" value="Bacteria"/>
</dbReference>
<dbReference type="HOGENOM" id="CLU_087843_4_1_6"/>
<dbReference type="OrthoDB" id="9789556at2"/>
<dbReference type="Proteomes" id="UP000001171">
    <property type="component" value="Chromosome"/>
</dbReference>
<dbReference type="GO" id="GO:0005829">
    <property type="term" value="C:cytosol"/>
    <property type="evidence" value="ECO:0007669"/>
    <property type="project" value="TreeGrafter"/>
</dbReference>
<dbReference type="GO" id="GO:0003723">
    <property type="term" value="F:RNA binding"/>
    <property type="evidence" value="ECO:0007669"/>
    <property type="project" value="UniProtKB-UniRule"/>
</dbReference>
<dbReference type="GO" id="GO:0006353">
    <property type="term" value="P:DNA-templated transcription termination"/>
    <property type="evidence" value="ECO:0007669"/>
    <property type="project" value="UniProtKB-UniRule"/>
</dbReference>
<dbReference type="GO" id="GO:0031564">
    <property type="term" value="P:transcription antitermination"/>
    <property type="evidence" value="ECO:0007669"/>
    <property type="project" value="UniProtKB-KW"/>
</dbReference>
<dbReference type="CDD" id="cd00619">
    <property type="entry name" value="Terminator_NusB"/>
    <property type="match status" value="1"/>
</dbReference>
<dbReference type="FunFam" id="1.10.940.10:FF:000001">
    <property type="entry name" value="Transcription antitermination factor NusB"/>
    <property type="match status" value="1"/>
</dbReference>
<dbReference type="Gene3D" id="1.10.940.10">
    <property type="entry name" value="NusB-like"/>
    <property type="match status" value="1"/>
</dbReference>
<dbReference type="HAMAP" id="MF_00073">
    <property type="entry name" value="NusB"/>
    <property type="match status" value="1"/>
</dbReference>
<dbReference type="InterPro" id="IPR035926">
    <property type="entry name" value="NusB-like_sf"/>
</dbReference>
<dbReference type="InterPro" id="IPR011605">
    <property type="entry name" value="NusB_fam"/>
</dbReference>
<dbReference type="InterPro" id="IPR006027">
    <property type="entry name" value="NusB_RsmB_TIM44"/>
</dbReference>
<dbReference type="NCBIfam" id="TIGR01951">
    <property type="entry name" value="nusB"/>
    <property type="match status" value="1"/>
</dbReference>
<dbReference type="PANTHER" id="PTHR11078:SF3">
    <property type="entry name" value="ANTITERMINATION NUSB DOMAIN-CONTAINING PROTEIN"/>
    <property type="match status" value="1"/>
</dbReference>
<dbReference type="PANTHER" id="PTHR11078">
    <property type="entry name" value="N UTILIZATION SUBSTANCE PROTEIN B-RELATED"/>
    <property type="match status" value="1"/>
</dbReference>
<dbReference type="Pfam" id="PF01029">
    <property type="entry name" value="NusB"/>
    <property type="match status" value="1"/>
</dbReference>
<dbReference type="SUPFAM" id="SSF48013">
    <property type="entry name" value="NusB-like"/>
    <property type="match status" value="1"/>
</dbReference>
<comment type="function">
    <text evidence="1">Involved in transcription antitermination. Required for transcription of ribosomal RNA (rRNA) genes. Binds specifically to the boxA antiterminator sequence of the ribosomal RNA (rrn) operons.</text>
</comment>
<comment type="similarity">
    <text evidence="1">Belongs to the NusB family.</text>
</comment>
<protein>
    <recommendedName>
        <fullName evidence="1">Transcription antitermination protein NusB</fullName>
    </recommendedName>
    <alternativeName>
        <fullName evidence="1">Antitermination factor NusB</fullName>
    </alternativeName>
</protein>
<gene>
    <name evidence="1" type="primary">nusB</name>
    <name type="ordered locus">IL2141</name>
</gene>
<evidence type="ECO:0000255" key="1">
    <source>
        <dbReference type="HAMAP-Rule" id="MF_00073"/>
    </source>
</evidence>
<feature type="chain" id="PRO_0000265533" description="Transcription antitermination protein NusB">
    <location>
        <begin position="1"/>
        <end position="139"/>
    </location>
</feature>
<reference key="1">
    <citation type="journal article" date="2004" name="Proc. Natl. Acad. Sci. U.S.A.">
        <title>Genome sequence of the deep-sea gamma-proteobacterium Idiomarina loihiensis reveals amino acid fermentation as a source of carbon and energy.</title>
        <authorList>
            <person name="Hou S."/>
            <person name="Saw J.H."/>
            <person name="Lee K.S."/>
            <person name="Freitas T.A."/>
            <person name="Belisle C."/>
            <person name="Kawarabayasi Y."/>
            <person name="Donachie S.P."/>
            <person name="Pikina A."/>
            <person name="Galperin M.Y."/>
            <person name="Koonin E.V."/>
            <person name="Makarova K.S."/>
            <person name="Omelchenko M.V."/>
            <person name="Sorokin A."/>
            <person name="Wolf Y.I."/>
            <person name="Li Q.X."/>
            <person name="Keum Y.S."/>
            <person name="Campbell S."/>
            <person name="Denery J."/>
            <person name="Aizawa S."/>
            <person name="Shibata S."/>
            <person name="Malahoff A."/>
            <person name="Alam M."/>
        </authorList>
    </citation>
    <scope>NUCLEOTIDE SEQUENCE [LARGE SCALE GENOMIC DNA]</scope>
    <source>
        <strain>ATCC BAA-735 / DSM 15497 / L2-TR</strain>
    </source>
</reference>
<accession>Q5QVE5</accession>
<name>NUSB_IDILO</name>
<organism>
    <name type="scientific">Idiomarina loihiensis (strain ATCC BAA-735 / DSM 15497 / L2-TR)</name>
    <dbReference type="NCBI Taxonomy" id="283942"/>
    <lineage>
        <taxon>Bacteria</taxon>
        <taxon>Pseudomonadati</taxon>
        <taxon>Pseudomonadota</taxon>
        <taxon>Gammaproteobacteria</taxon>
        <taxon>Alteromonadales</taxon>
        <taxon>Idiomarinaceae</taxon>
        <taxon>Idiomarina</taxon>
    </lineage>
</organism>
<keyword id="KW-1185">Reference proteome</keyword>
<keyword id="KW-0694">RNA-binding</keyword>
<keyword id="KW-0804">Transcription</keyword>
<keyword id="KW-0889">Transcription antitermination</keyword>
<keyword id="KW-0805">Transcription regulation</keyword>
<proteinExistence type="inferred from homology"/>
<sequence>MKPAARRKARKLAVQAIYSWQLSQNSFSDIEAQFLTENDTSKVDVDYFLELVRGVGGHYRTLDEALEPFLDRPIKELDPIELAVLRLAAYELRERVDVPYKVAINEAIELAKSFGADESHRFVNGVLDKAVDTFRPTRQ</sequence>